<reference key="1">
    <citation type="journal article" date="2005" name="Genome Res.">
        <title>Complete genome sequence of the hyperthermophilic archaeon Thermococcus kodakaraensis KOD1 and comparison with Pyrococcus genomes.</title>
        <authorList>
            <person name="Fukui T."/>
            <person name="Atomi H."/>
            <person name="Kanai T."/>
            <person name="Matsumi R."/>
            <person name="Fujiwara S."/>
            <person name="Imanaka T."/>
        </authorList>
    </citation>
    <scope>NUCLEOTIDE SEQUENCE [LARGE SCALE GENOMIC DNA]</scope>
    <source>
        <strain>ATCC BAA-918 / JCM 12380 / KOD1</strain>
    </source>
</reference>
<evidence type="ECO:0000255" key="1">
    <source>
        <dbReference type="HAMAP-Rule" id="MF_00562"/>
    </source>
</evidence>
<proteinExistence type="inferred from homology"/>
<accession>Q5JH30</accession>
<dbReference type="EC" id="3.1.1.96" evidence="1"/>
<dbReference type="EMBL" id="AP006878">
    <property type="protein sequence ID" value="BAD85611.1"/>
    <property type="molecule type" value="Genomic_DNA"/>
</dbReference>
<dbReference type="RefSeq" id="WP_011250373.1">
    <property type="nucleotide sequence ID" value="NC_006624.1"/>
</dbReference>
<dbReference type="SMR" id="Q5JH30"/>
<dbReference type="FunCoup" id="Q5JH30">
    <property type="interactions" value="3"/>
</dbReference>
<dbReference type="STRING" id="69014.TK1422"/>
<dbReference type="EnsemblBacteria" id="BAD85611">
    <property type="protein sequence ID" value="BAD85611"/>
    <property type="gene ID" value="TK1422"/>
</dbReference>
<dbReference type="GeneID" id="78447943"/>
<dbReference type="KEGG" id="tko:TK1422"/>
<dbReference type="PATRIC" id="fig|69014.16.peg.1384"/>
<dbReference type="eggNOG" id="arCOG01616">
    <property type="taxonomic scope" value="Archaea"/>
</dbReference>
<dbReference type="HOGENOM" id="CLU_056464_1_0_2"/>
<dbReference type="InParanoid" id="Q5JH30"/>
<dbReference type="OrthoDB" id="9863at2157"/>
<dbReference type="PhylomeDB" id="Q5JH30"/>
<dbReference type="Proteomes" id="UP000000536">
    <property type="component" value="Chromosome"/>
</dbReference>
<dbReference type="GO" id="GO:0051499">
    <property type="term" value="F:D-aminoacyl-tRNA deacylase activity"/>
    <property type="evidence" value="ECO:0000318"/>
    <property type="project" value="GO_Central"/>
</dbReference>
<dbReference type="GO" id="GO:0008270">
    <property type="term" value="F:zinc ion binding"/>
    <property type="evidence" value="ECO:0007669"/>
    <property type="project" value="UniProtKB-UniRule"/>
</dbReference>
<dbReference type="GO" id="GO:0019478">
    <property type="term" value="P:D-amino acid catabolic process"/>
    <property type="evidence" value="ECO:0007669"/>
    <property type="project" value="UniProtKB-UniRule"/>
</dbReference>
<dbReference type="FunFam" id="3.40.630.50:FF:000001">
    <property type="entry name" value="D-aminoacyl-tRNA deacylase"/>
    <property type="match status" value="1"/>
</dbReference>
<dbReference type="Gene3D" id="3.40.50.10700">
    <property type="entry name" value="AF0625-like"/>
    <property type="match status" value="1"/>
</dbReference>
<dbReference type="Gene3D" id="3.40.630.50">
    <property type="entry name" value="AF0625-like"/>
    <property type="match status" value="1"/>
</dbReference>
<dbReference type="HAMAP" id="MF_00562">
    <property type="entry name" value="Deacylase_DtdA"/>
    <property type="match status" value="1"/>
</dbReference>
<dbReference type="InterPro" id="IPR018033">
    <property type="entry name" value="Deacylase_DtdA_archaea"/>
</dbReference>
<dbReference type="InterPro" id="IPR007508">
    <property type="entry name" value="DtdA"/>
</dbReference>
<dbReference type="NCBIfam" id="NF003074">
    <property type="entry name" value="PRK03995.1-6"/>
    <property type="match status" value="1"/>
</dbReference>
<dbReference type="PANTHER" id="PTHR34667">
    <property type="entry name" value="D-AMINOACYL-TRNA DEACYLASE"/>
    <property type="match status" value="1"/>
</dbReference>
<dbReference type="PANTHER" id="PTHR34667:SF1">
    <property type="entry name" value="D-AMINOACYL-TRNA DEACYLASE"/>
    <property type="match status" value="1"/>
</dbReference>
<dbReference type="Pfam" id="PF04414">
    <property type="entry name" value="tRNA_deacylase"/>
    <property type="match status" value="1"/>
</dbReference>
<dbReference type="PIRSF" id="PIRSF016210">
    <property type="entry name" value="UCP016210"/>
    <property type="match status" value="1"/>
</dbReference>
<dbReference type="SUPFAM" id="SSF142535">
    <property type="entry name" value="AF0625-like"/>
    <property type="match status" value="1"/>
</dbReference>
<keyword id="KW-0378">Hydrolase</keyword>
<keyword id="KW-0479">Metal-binding</keyword>
<keyword id="KW-1185">Reference proteome</keyword>
<keyword id="KW-0862">Zinc</keyword>
<protein>
    <recommendedName>
        <fullName evidence="1">D-aminoacyl-tRNA deacylase</fullName>
        <ecNumber evidence="1">3.1.1.96</ecNumber>
    </recommendedName>
    <alternativeName>
        <fullName>D-tyrosyl-tRNA(Tyr) deacylase</fullName>
    </alternativeName>
</protein>
<organism>
    <name type="scientific">Thermococcus kodakarensis (strain ATCC BAA-918 / JCM 12380 / KOD1)</name>
    <name type="common">Pyrococcus kodakaraensis (strain KOD1)</name>
    <dbReference type="NCBI Taxonomy" id="69014"/>
    <lineage>
        <taxon>Archaea</taxon>
        <taxon>Methanobacteriati</taxon>
        <taxon>Methanobacteriota</taxon>
        <taxon>Thermococci</taxon>
        <taxon>Thermococcales</taxon>
        <taxon>Thermococcaceae</taxon>
        <taxon>Thermococcus</taxon>
    </lineage>
</organism>
<gene>
    <name evidence="1" type="primary">dtdA</name>
    <name type="ordered locus">TK1422</name>
</gene>
<name>DTDA_THEKO</name>
<sequence length="272" mass="30393">MKVVMTTKVDLASMNIREKLIENFGFKEDELLFDGNPVYQKDDVVILTTNQEMIYYDGLDRAIERQTGIKPEIIAFASRHSSKQKLPALTTHVTGNWGGALYGGKDESLAIAQPSAMKLALLKMNELNDLGWTVCYEATHHGPSELDVPSFFIEIGSSEEEWVNDRAGEIVAETIIYVLENYQNSKFKVAVGIGGGHYAPKQTKRALQTDLAFGHIAPKYAHPLSKELLLKAIERTAERVDAIYVDWKGSKGETRQMARAVAEELGLEFIRD</sequence>
<comment type="function">
    <text evidence="1">D-aminoacyl-tRNA deacylase with broad substrate specificity. By recycling D-aminoacyl-tRNA to D-amino acids and free tRNA molecules, this enzyme counteracts the toxicity associated with the formation of D-aminoacyl-tRNA entities in vivo.</text>
</comment>
<comment type="catalytic activity">
    <reaction evidence="1">
        <text>a D-aminoacyl-tRNA + H2O = a tRNA + a D-alpha-amino acid + H(+)</text>
        <dbReference type="Rhea" id="RHEA:13953"/>
        <dbReference type="Rhea" id="RHEA-COMP:10123"/>
        <dbReference type="Rhea" id="RHEA-COMP:10124"/>
        <dbReference type="ChEBI" id="CHEBI:15377"/>
        <dbReference type="ChEBI" id="CHEBI:15378"/>
        <dbReference type="ChEBI" id="CHEBI:59871"/>
        <dbReference type="ChEBI" id="CHEBI:78442"/>
        <dbReference type="ChEBI" id="CHEBI:79333"/>
        <dbReference type="EC" id="3.1.1.96"/>
    </reaction>
</comment>
<comment type="catalytic activity">
    <reaction evidence="1">
        <text>glycyl-tRNA(Ala) + H2O = tRNA(Ala) + glycine + H(+)</text>
        <dbReference type="Rhea" id="RHEA:53744"/>
        <dbReference type="Rhea" id="RHEA-COMP:9657"/>
        <dbReference type="Rhea" id="RHEA-COMP:13640"/>
        <dbReference type="ChEBI" id="CHEBI:15377"/>
        <dbReference type="ChEBI" id="CHEBI:15378"/>
        <dbReference type="ChEBI" id="CHEBI:57305"/>
        <dbReference type="ChEBI" id="CHEBI:78442"/>
        <dbReference type="ChEBI" id="CHEBI:78522"/>
        <dbReference type="EC" id="3.1.1.96"/>
    </reaction>
</comment>
<comment type="cofactor">
    <cofactor evidence="1">
        <name>Zn(2+)</name>
        <dbReference type="ChEBI" id="CHEBI:29105"/>
    </cofactor>
    <text evidence="1">Binds 2 Zn(2+) ions per subunit.</text>
</comment>
<comment type="subunit">
    <text evidence="1">Monomer.</text>
</comment>
<comment type="similarity">
    <text evidence="1">Belongs to the DtdA deacylase family.</text>
</comment>
<feature type="chain" id="PRO_0000158973" description="D-aminoacyl-tRNA deacylase">
    <location>
        <begin position="1"/>
        <end position="272"/>
    </location>
</feature>